<organism>
    <name type="scientific">Blochmanniella floridana</name>
    <dbReference type="NCBI Taxonomy" id="203907"/>
    <lineage>
        <taxon>Bacteria</taxon>
        <taxon>Pseudomonadati</taxon>
        <taxon>Pseudomonadota</taxon>
        <taxon>Gammaproteobacteria</taxon>
        <taxon>Enterobacterales</taxon>
        <taxon>Enterobacteriaceae</taxon>
        <taxon>ant endosymbionts</taxon>
        <taxon>Candidatus Blochmanniella</taxon>
    </lineage>
</organism>
<name>RSMA_BLOFL</name>
<protein>
    <recommendedName>
        <fullName evidence="1">Ribosomal RNA small subunit methyltransferase A</fullName>
        <ecNumber evidence="1">2.1.1.182</ecNumber>
    </recommendedName>
    <alternativeName>
        <fullName evidence="1">16S rRNA (adenine(1518)-N(6)/adenine(1519)-N(6))-dimethyltransferase</fullName>
    </alternativeName>
    <alternativeName>
        <fullName evidence="1">16S rRNA dimethyladenosine transferase</fullName>
    </alternativeName>
    <alternativeName>
        <fullName evidence="1">16S rRNA dimethylase</fullName>
    </alternativeName>
    <alternativeName>
        <fullName evidence="1">S-adenosylmethionine-6-N', N'-adenosyl(rRNA) dimethyltransferase</fullName>
    </alternativeName>
</protein>
<comment type="function">
    <text evidence="1">Specifically dimethylates two adjacent adenosines (A1518 and A1519) in the loop of a conserved hairpin near the 3'-end of 16S rRNA in the 30S particle. May play a critical role in biogenesis of 30S subunits.</text>
</comment>
<comment type="catalytic activity">
    <reaction evidence="1">
        <text>adenosine(1518)/adenosine(1519) in 16S rRNA + 4 S-adenosyl-L-methionine = N(6)-dimethyladenosine(1518)/N(6)-dimethyladenosine(1519) in 16S rRNA + 4 S-adenosyl-L-homocysteine + 4 H(+)</text>
        <dbReference type="Rhea" id="RHEA:19609"/>
        <dbReference type="Rhea" id="RHEA-COMP:10232"/>
        <dbReference type="Rhea" id="RHEA-COMP:10233"/>
        <dbReference type="ChEBI" id="CHEBI:15378"/>
        <dbReference type="ChEBI" id="CHEBI:57856"/>
        <dbReference type="ChEBI" id="CHEBI:59789"/>
        <dbReference type="ChEBI" id="CHEBI:74411"/>
        <dbReference type="ChEBI" id="CHEBI:74493"/>
        <dbReference type="EC" id="2.1.1.182"/>
    </reaction>
</comment>
<comment type="subcellular location">
    <subcellularLocation>
        <location evidence="1">Cytoplasm</location>
    </subcellularLocation>
</comment>
<comment type="similarity">
    <text evidence="1">Belongs to the class I-like SAM-binding methyltransferase superfamily. rRNA adenine N(6)-methyltransferase family. RsmA subfamily.</text>
</comment>
<reference key="1">
    <citation type="journal article" date="2003" name="Proc. Natl. Acad. Sci. U.S.A.">
        <title>The genome sequence of Blochmannia floridanus: comparative analysis of reduced genomes.</title>
        <authorList>
            <person name="Gil R."/>
            <person name="Silva F.J."/>
            <person name="Zientz E."/>
            <person name="Delmotte F."/>
            <person name="Gonzalez-Candelas F."/>
            <person name="Latorre A."/>
            <person name="Rausell C."/>
            <person name="Kamerbeek J."/>
            <person name="Gadau J."/>
            <person name="Hoelldobler B."/>
            <person name="van Ham R.C.H.J."/>
            <person name="Gross R."/>
            <person name="Moya A."/>
        </authorList>
    </citation>
    <scope>NUCLEOTIDE SEQUENCE [LARGE SCALE GENOMIC DNA]</scope>
</reference>
<sequence length="271" mass="31537">MQKKYYKNHVIQKKWGQIFLKDQNIIHSIISILNLKKYQNVIEIGPGLGALTKPISDIIDFLILIERDPNLVNRLLHTFTSKKVKIFNKDAMTIDFSKLLTNPNQKIRLIGNLPYNISTKLIIHLYKYINIIHDMHFMLQKEVAQRIVAQPNNKAYGRLSIFAQYYCKVQALLEVPKKSFIPIPKVESMIVQFIPYHTNNPYPTVNISLLSLLTKFAFHQRRKIIHNSLSSLLNSTEIIQCGINTESRAENLTIQQFCKLTTILHHKYNLN</sequence>
<proteinExistence type="inferred from homology"/>
<gene>
    <name evidence="1" type="primary">rsmA</name>
    <name evidence="1" type="synonym">ksgA</name>
    <name type="ordered locus">Bfl126</name>
</gene>
<feature type="chain" id="PRO_0000101507" description="Ribosomal RNA small subunit methyltransferase A">
    <location>
        <begin position="1"/>
        <end position="271"/>
    </location>
</feature>
<feature type="binding site" evidence="1">
    <location>
        <position position="20"/>
    </location>
    <ligand>
        <name>S-adenosyl-L-methionine</name>
        <dbReference type="ChEBI" id="CHEBI:59789"/>
    </ligand>
</feature>
<feature type="binding site" evidence="1">
    <location>
        <position position="45"/>
    </location>
    <ligand>
        <name>S-adenosyl-L-methionine</name>
        <dbReference type="ChEBI" id="CHEBI:59789"/>
    </ligand>
</feature>
<feature type="binding site" evidence="1">
    <location>
        <position position="66"/>
    </location>
    <ligand>
        <name>S-adenosyl-L-methionine</name>
        <dbReference type="ChEBI" id="CHEBI:59789"/>
    </ligand>
</feature>
<feature type="binding site" evidence="1">
    <location>
        <position position="90"/>
    </location>
    <ligand>
        <name>S-adenosyl-L-methionine</name>
        <dbReference type="ChEBI" id="CHEBI:59789"/>
    </ligand>
</feature>
<feature type="binding site" evidence="1">
    <location>
        <position position="112"/>
    </location>
    <ligand>
        <name>S-adenosyl-L-methionine</name>
        <dbReference type="ChEBI" id="CHEBI:59789"/>
    </ligand>
</feature>
<keyword id="KW-0963">Cytoplasm</keyword>
<keyword id="KW-0489">Methyltransferase</keyword>
<keyword id="KW-1185">Reference proteome</keyword>
<keyword id="KW-0694">RNA-binding</keyword>
<keyword id="KW-0698">rRNA processing</keyword>
<keyword id="KW-0949">S-adenosyl-L-methionine</keyword>
<keyword id="KW-0808">Transferase</keyword>
<evidence type="ECO:0000255" key="1">
    <source>
        <dbReference type="HAMAP-Rule" id="MF_00607"/>
    </source>
</evidence>
<dbReference type="EC" id="2.1.1.182" evidence="1"/>
<dbReference type="EMBL" id="BX248583">
    <property type="protein sequence ID" value="CAD83647.1"/>
    <property type="molecule type" value="Genomic_DNA"/>
</dbReference>
<dbReference type="SMR" id="Q7VQK3"/>
<dbReference type="STRING" id="203907.Bfl126"/>
<dbReference type="KEGG" id="bfl:Bfl126"/>
<dbReference type="eggNOG" id="COG0030">
    <property type="taxonomic scope" value="Bacteria"/>
</dbReference>
<dbReference type="HOGENOM" id="CLU_041220_0_0_6"/>
<dbReference type="OrthoDB" id="9814755at2"/>
<dbReference type="Proteomes" id="UP000002192">
    <property type="component" value="Chromosome"/>
</dbReference>
<dbReference type="GO" id="GO:0005829">
    <property type="term" value="C:cytosol"/>
    <property type="evidence" value="ECO:0007669"/>
    <property type="project" value="TreeGrafter"/>
</dbReference>
<dbReference type="GO" id="GO:0052908">
    <property type="term" value="F:16S rRNA (adenine(1518)-N(6)/adenine(1519)-N(6))-dimethyltransferase activity"/>
    <property type="evidence" value="ECO:0007669"/>
    <property type="project" value="UniProtKB-EC"/>
</dbReference>
<dbReference type="GO" id="GO:0003723">
    <property type="term" value="F:RNA binding"/>
    <property type="evidence" value="ECO:0007669"/>
    <property type="project" value="UniProtKB-KW"/>
</dbReference>
<dbReference type="FunFam" id="1.10.8.100:FF:000001">
    <property type="entry name" value="Ribosomal RNA small subunit methyltransferase A"/>
    <property type="match status" value="1"/>
</dbReference>
<dbReference type="Gene3D" id="1.10.8.100">
    <property type="entry name" value="Ribosomal RNA adenine dimethylase-like, domain 2"/>
    <property type="match status" value="1"/>
</dbReference>
<dbReference type="Gene3D" id="3.40.50.150">
    <property type="entry name" value="Vaccinia Virus protein VP39"/>
    <property type="match status" value="1"/>
</dbReference>
<dbReference type="HAMAP" id="MF_00607">
    <property type="entry name" value="16SrRNA_methyltr_A"/>
    <property type="match status" value="1"/>
</dbReference>
<dbReference type="InterPro" id="IPR001737">
    <property type="entry name" value="KsgA/Erm"/>
</dbReference>
<dbReference type="InterPro" id="IPR023165">
    <property type="entry name" value="rRNA_Ade_diMease-like_C"/>
</dbReference>
<dbReference type="InterPro" id="IPR020596">
    <property type="entry name" value="rRNA_Ade_Mease_Trfase_CS"/>
</dbReference>
<dbReference type="InterPro" id="IPR020598">
    <property type="entry name" value="rRNA_Ade_methylase_Trfase_N"/>
</dbReference>
<dbReference type="InterPro" id="IPR011530">
    <property type="entry name" value="rRNA_adenine_dimethylase"/>
</dbReference>
<dbReference type="InterPro" id="IPR029063">
    <property type="entry name" value="SAM-dependent_MTases_sf"/>
</dbReference>
<dbReference type="NCBIfam" id="TIGR00755">
    <property type="entry name" value="ksgA"/>
    <property type="match status" value="1"/>
</dbReference>
<dbReference type="PANTHER" id="PTHR11727">
    <property type="entry name" value="DIMETHYLADENOSINE TRANSFERASE"/>
    <property type="match status" value="1"/>
</dbReference>
<dbReference type="PANTHER" id="PTHR11727:SF7">
    <property type="entry name" value="DIMETHYLADENOSINE TRANSFERASE-RELATED"/>
    <property type="match status" value="1"/>
</dbReference>
<dbReference type="Pfam" id="PF00398">
    <property type="entry name" value="RrnaAD"/>
    <property type="match status" value="1"/>
</dbReference>
<dbReference type="SMART" id="SM00650">
    <property type="entry name" value="rADc"/>
    <property type="match status" value="1"/>
</dbReference>
<dbReference type="SUPFAM" id="SSF53335">
    <property type="entry name" value="S-adenosyl-L-methionine-dependent methyltransferases"/>
    <property type="match status" value="1"/>
</dbReference>
<dbReference type="PROSITE" id="PS01131">
    <property type="entry name" value="RRNA_A_DIMETH"/>
    <property type="match status" value="1"/>
</dbReference>
<dbReference type="PROSITE" id="PS51689">
    <property type="entry name" value="SAM_RNA_A_N6_MT"/>
    <property type="match status" value="1"/>
</dbReference>
<accession>Q7VQK3</accession>